<gene>
    <name evidence="1" type="primary">rplS</name>
    <name type="ordered locus">ECIAI1_2727</name>
</gene>
<name>RL19_ECO8A</name>
<feature type="chain" id="PRO_1000193838" description="Large ribosomal subunit protein bL19">
    <location>
        <begin position="1"/>
        <end position="115"/>
    </location>
</feature>
<proteinExistence type="inferred from homology"/>
<dbReference type="EMBL" id="CU928160">
    <property type="protein sequence ID" value="CAQ99554.1"/>
    <property type="molecule type" value="Genomic_DNA"/>
</dbReference>
<dbReference type="RefSeq" id="WP_000065253.1">
    <property type="nucleotide sequence ID" value="NC_011741.1"/>
</dbReference>
<dbReference type="SMR" id="B7M975"/>
<dbReference type="GeneID" id="93774456"/>
<dbReference type="KEGG" id="ecr:ECIAI1_2727"/>
<dbReference type="HOGENOM" id="CLU_103507_2_1_6"/>
<dbReference type="GO" id="GO:0022625">
    <property type="term" value="C:cytosolic large ribosomal subunit"/>
    <property type="evidence" value="ECO:0007669"/>
    <property type="project" value="TreeGrafter"/>
</dbReference>
<dbReference type="GO" id="GO:0003735">
    <property type="term" value="F:structural constituent of ribosome"/>
    <property type="evidence" value="ECO:0007669"/>
    <property type="project" value="InterPro"/>
</dbReference>
<dbReference type="GO" id="GO:0006412">
    <property type="term" value="P:translation"/>
    <property type="evidence" value="ECO:0007669"/>
    <property type="project" value="UniProtKB-UniRule"/>
</dbReference>
<dbReference type="FunFam" id="2.30.30.790:FF:000001">
    <property type="entry name" value="50S ribosomal protein L19"/>
    <property type="match status" value="1"/>
</dbReference>
<dbReference type="Gene3D" id="2.30.30.790">
    <property type="match status" value="1"/>
</dbReference>
<dbReference type="HAMAP" id="MF_00402">
    <property type="entry name" value="Ribosomal_bL19"/>
    <property type="match status" value="1"/>
</dbReference>
<dbReference type="InterPro" id="IPR001857">
    <property type="entry name" value="Ribosomal_bL19"/>
</dbReference>
<dbReference type="InterPro" id="IPR018257">
    <property type="entry name" value="Ribosomal_bL19_CS"/>
</dbReference>
<dbReference type="InterPro" id="IPR038657">
    <property type="entry name" value="Ribosomal_bL19_sf"/>
</dbReference>
<dbReference type="InterPro" id="IPR008991">
    <property type="entry name" value="Translation_prot_SH3-like_sf"/>
</dbReference>
<dbReference type="NCBIfam" id="TIGR01024">
    <property type="entry name" value="rplS_bact"/>
    <property type="match status" value="1"/>
</dbReference>
<dbReference type="PANTHER" id="PTHR15680:SF9">
    <property type="entry name" value="LARGE RIBOSOMAL SUBUNIT PROTEIN BL19M"/>
    <property type="match status" value="1"/>
</dbReference>
<dbReference type="PANTHER" id="PTHR15680">
    <property type="entry name" value="RIBOSOMAL PROTEIN L19"/>
    <property type="match status" value="1"/>
</dbReference>
<dbReference type="Pfam" id="PF01245">
    <property type="entry name" value="Ribosomal_L19"/>
    <property type="match status" value="1"/>
</dbReference>
<dbReference type="PIRSF" id="PIRSF002191">
    <property type="entry name" value="Ribosomal_L19"/>
    <property type="match status" value="1"/>
</dbReference>
<dbReference type="PRINTS" id="PR00061">
    <property type="entry name" value="RIBOSOMALL19"/>
</dbReference>
<dbReference type="SUPFAM" id="SSF50104">
    <property type="entry name" value="Translation proteins SH3-like domain"/>
    <property type="match status" value="1"/>
</dbReference>
<dbReference type="PROSITE" id="PS01015">
    <property type="entry name" value="RIBOSOMAL_L19"/>
    <property type="match status" value="1"/>
</dbReference>
<keyword id="KW-0687">Ribonucleoprotein</keyword>
<keyword id="KW-0689">Ribosomal protein</keyword>
<protein>
    <recommendedName>
        <fullName evidence="1">Large ribosomal subunit protein bL19</fullName>
    </recommendedName>
    <alternativeName>
        <fullName evidence="2">50S ribosomal protein L19</fullName>
    </alternativeName>
</protein>
<organism>
    <name type="scientific">Escherichia coli O8 (strain IAI1)</name>
    <dbReference type="NCBI Taxonomy" id="585034"/>
    <lineage>
        <taxon>Bacteria</taxon>
        <taxon>Pseudomonadati</taxon>
        <taxon>Pseudomonadota</taxon>
        <taxon>Gammaproteobacteria</taxon>
        <taxon>Enterobacterales</taxon>
        <taxon>Enterobacteriaceae</taxon>
        <taxon>Escherichia</taxon>
    </lineage>
</organism>
<reference key="1">
    <citation type="journal article" date="2009" name="PLoS Genet.">
        <title>Organised genome dynamics in the Escherichia coli species results in highly diverse adaptive paths.</title>
        <authorList>
            <person name="Touchon M."/>
            <person name="Hoede C."/>
            <person name="Tenaillon O."/>
            <person name="Barbe V."/>
            <person name="Baeriswyl S."/>
            <person name="Bidet P."/>
            <person name="Bingen E."/>
            <person name="Bonacorsi S."/>
            <person name="Bouchier C."/>
            <person name="Bouvet O."/>
            <person name="Calteau A."/>
            <person name="Chiapello H."/>
            <person name="Clermont O."/>
            <person name="Cruveiller S."/>
            <person name="Danchin A."/>
            <person name="Diard M."/>
            <person name="Dossat C."/>
            <person name="Karoui M.E."/>
            <person name="Frapy E."/>
            <person name="Garry L."/>
            <person name="Ghigo J.M."/>
            <person name="Gilles A.M."/>
            <person name="Johnson J."/>
            <person name="Le Bouguenec C."/>
            <person name="Lescat M."/>
            <person name="Mangenot S."/>
            <person name="Martinez-Jehanne V."/>
            <person name="Matic I."/>
            <person name="Nassif X."/>
            <person name="Oztas S."/>
            <person name="Petit M.A."/>
            <person name="Pichon C."/>
            <person name="Rouy Z."/>
            <person name="Ruf C.S."/>
            <person name="Schneider D."/>
            <person name="Tourret J."/>
            <person name="Vacherie B."/>
            <person name="Vallenet D."/>
            <person name="Medigue C."/>
            <person name="Rocha E.P.C."/>
            <person name="Denamur E."/>
        </authorList>
    </citation>
    <scope>NUCLEOTIDE SEQUENCE [LARGE SCALE GENOMIC DNA]</scope>
    <source>
        <strain>IAI1</strain>
    </source>
</reference>
<evidence type="ECO:0000255" key="1">
    <source>
        <dbReference type="HAMAP-Rule" id="MF_00402"/>
    </source>
</evidence>
<evidence type="ECO:0000305" key="2"/>
<sequence>MSNIIKQLEQEQMKQDVPSFRPGDTVEVKVWVVEGSKKRLQAFEGVVIAIRNRGLHSAFTVRKISNGEGVERVFQTHSPVVDSISVKRRGAVRKAKLYYLRERTGKAARIKERLN</sequence>
<comment type="function">
    <text evidence="1">This protein is located at the 30S-50S ribosomal subunit interface and may play a role in the structure and function of the aminoacyl-tRNA binding site.</text>
</comment>
<comment type="similarity">
    <text evidence="1">Belongs to the bacterial ribosomal protein bL19 family.</text>
</comment>
<accession>B7M975</accession>